<feature type="chain" id="PRO_0000339588" description="ATP synthase subunit beta">
    <location>
        <begin position="1"/>
        <end position="458"/>
    </location>
</feature>
<feature type="binding site" evidence="1">
    <location>
        <begin position="148"/>
        <end position="155"/>
    </location>
    <ligand>
        <name>ATP</name>
        <dbReference type="ChEBI" id="CHEBI:30616"/>
    </ligand>
</feature>
<keyword id="KW-0066">ATP synthesis</keyword>
<keyword id="KW-0067">ATP-binding</keyword>
<keyword id="KW-0997">Cell inner membrane</keyword>
<keyword id="KW-1003">Cell membrane</keyword>
<keyword id="KW-0139">CF(1)</keyword>
<keyword id="KW-0375">Hydrogen ion transport</keyword>
<keyword id="KW-0406">Ion transport</keyword>
<keyword id="KW-0472">Membrane</keyword>
<keyword id="KW-0547">Nucleotide-binding</keyword>
<keyword id="KW-1185">Reference proteome</keyword>
<keyword id="KW-1278">Translocase</keyword>
<keyword id="KW-0813">Transport</keyword>
<dbReference type="EC" id="7.1.2.2" evidence="1"/>
<dbReference type="EMBL" id="CP000606">
    <property type="protein sequence ID" value="ABO25708.1"/>
    <property type="molecule type" value="Genomic_DNA"/>
</dbReference>
<dbReference type="RefSeq" id="WP_011867636.1">
    <property type="nucleotide sequence ID" value="NC_009092.1"/>
</dbReference>
<dbReference type="SMR" id="A3QJR0"/>
<dbReference type="STRING" id="323850.Shew_3845"/>
<dbReference type="KEGG" id="slo:Shew_3845"/>
<dbReference type="eggNOG" id="COG0055">
    <property type="taxonomic scope" value="Bacteria"/>
</dbReference>
<dbReference type="HOGENOM" id="CLU_022398_0_2_6"/>
<dbReference type="OrthoDB" id="9801639at2"/>
<dbReference type="Proteomes" id="UP000001558">
    <property type="component" value="Chromosome"/>
</dbReference>
<dbReference type="GO" id="GO:0005886">
    <property type="term" value="C:plasma membrane"/>
    <property type="evidence" value="ECO:0007669"/>
    <property type="project" value="UniProtKB-SubCell"/>
</dbReference>
<dbReference type="GO" id="GO:0045259">
    <property type="term" value="C:proton-transporting ATP synthase complex"/>
    <property type="evidence" value="ECO:0007669"/>
    <property type="project" value="UniProtKB-KW"/>
</dbReference>
<dbReference type="GO" id="GO:0005524">
    <property type="term" value="F:ATP binding"/>
    <property type="evidence" value="ECO:0007669"/>
    <property type="project" value="UniProtKB-UniRule"/>
</dbReference>
<dbReference type="GO" id="GO:0016887">
    <property type="term" value="F:ATP hydrolysis activity"/>
    <property type="evidence" value="ECO:0007669"/>
    <property type="project" value="InterPro"/>
</dbReference>
<dbReference type="GO" id="GO:0046933">
    <property type="term" value="F:proton-transporting ATP synthase activity, rotational mechanism"/>
    <property type="evidence" value="ECO:0007669"/>
    <property type="project" value="UniProtKB-UniRule"/>
</dbReference>
<dbReference type="CDD" id="cd18110">
    <property type="entry name" value="ATP-synt_F1_beta_C"/>
    <property type="match status" value="1"/>
</dbReference>
<dbReference type="CDD" id="cd18115">
    <property type="entry name" value="ATP-synt_F1_beta_N"/>
    <property type="match status" value="1"/>
</dbReference>
<dbReference type="CDD" id="cd01133">
    <property type="entry name" value="F1-ATPase_beta_CD"/>
    <property type="match status" value="1"/>
</dbReference>
<dbReference type="FunFam" id="1.10.1140.10:FF:000001">
    <property type="entry name" value="ATP synthase subunit beta"/>
    <property type="match status" value="1"/>
</dbReference>
<dbReference type="FunFam" id="2.40.10.170:FF:000003">
    <property type="entry name" value="ATP synthase subunit beta"/>
    <property type="match status" value="1"/>
</dbReference>
<dbReference type="FunFam" id="3.40.50.300:FF:000004">
    <property type="entry name" value="ATP synthase subunit beta"/>
    <property type="match status" value="1"/>
</dbReference>
<dbReference type="Gene3D" id="2.40.10.170">
    <property type="match status" value="1"/>
</dbReference>
<dbReference type="Gene3D" id="1.10.1140.10">
    <property type="entry name" value="Bovine Mitochondrial F1-atpase, Atp Synthase Beta Chain, Chain D, domain 3"/>
    <property type="match status" value="1"/>
</dbReference>
<dbReference type="Gene3D" id="3.40.50.300">
    <property type="entry name" value="P-loop containing nucleotide triphosphate hydrolases"/>
    <property type="match status" value="1"/>
</dbReference>
<dbReference type="HAMAP" id="MF_01347">
    <property type="entry name" value="ATP_synth_beta_bact"/>
    <property type="match status" value="1"/>
</dbReference>
<dbReference type="InterPro" id="IPR003593">
    <property type="entry name" value="AAA+_ATPase"/>
</dbReference>
<dbReference type="InterPro" id="IPR055190">
    <property type="entry name" value="ATP-synt_VA_C"/>
</dbReference>
<dbReference type="InterPro" id="IPR005722">
    <property type="entry name" value="ATP_synth_F1_bsu"/>
</dbReference>
<dbReference type="InterPro" id="IPR020003">
    <property type="entry name" value="ATPase_a/bsu_AS"/>
</dbReference>
<dbReference type="InterPro" id="IPR050053">
    <property type="entry name" value="ATPase_alpha/beta_chains"/>
</dbReference>
<dbReference type="InterPro" id="IPR004100">
    <property type="entry name" value="ATPase_F1/V1/A1_a/bsu_N"/>
</dbReference>
<dbReference type="InterPro" id="IPR036121">
    <property type="entry name" value="ATPase_F1/V1/A1_a/bsu_N_sf"/>
</dbReference>
<dbReference type="InterPro" id="IPR000194">
    <property type="entry name" value="ATPase_F1/V1/A1_a/bsu_nucl-bd"/>
</dbReference>
<dbReference type="InterPro" id="IPR024034">
    <property type="entry name" value="ATPase_F1/V1_b/a_C"/>
</dbReference>
<dbReference type="InterPro" id="IPR027417">
    <property type="entry name" value="P-loop_NTPase"/>
</dbReference>
<dbReference type="NCBIfam" id="TIGR01039">
    <property type="entry name" value="atpD"/>
    <property type="match status" value="1"/>
</dbReference>
<dbReference type="PANTHER" id="PTHR15184">
    <property type="entry name" value="ATP SYNTHASE"/>
    <property type="match status" value="1"/>
</dbReference>
<dbReference type="PANTHER" id="PTHR15184:SF71">
    <property type="entry name" value="ATP SYNTHASE SUBUNIT BETA, MITOCHONDRIAL"/>
    <property type="match status" value="1"/>
</dbReference>
<dbReference type="Pfam" id="PF00006">
    <property type="entry name" value="ATP-synt_ab"/>
    <property type="match status" value="1"/>
</dbReference>
<dbReference type="Pfam" id="PF02874">
    <property type="entry name" value="ATP-synt_ab_N"/>
    <property type="match status" value="1"/>
</dbReference>
<dbReference type="Pfam" id="PF22919">
    <property type="entry name" value="ATP-synt_VA_C"/>
    <property type="match status" value="1"/>
</dbReference>
<dbReference type="SMART" id="SM00382">
    <property type="entry name" value="AAA"/>
    <property type="match status" value="1"/>
</dbReference>
<dbReference type="SUPFAM" id="SSF47917">
    <property type="entry name" value="C-terminal domain of alpha and beta subunits of F1 ATP synthase"/>
    <property type="match status" value="1"/>
</dbReference>
<dbReference type="SUPFAM" id="SSF50615">
    <property type="entry name" value="N-terminal domain of alpha and beta subunits of F1 ATP synthase"/>
    <property type="match status" value="1"/>
</dbReference>
<dbReference type="SUPFAM" id="SSF52540">
    <property type="entry name" value="P-loop containing nucleoside triphosphate hydrolases"/>
    <property type="match status" value="1"/>
</dbReference>
<dbReference type="PROSITE" id="PS00152">
    <property type="entry name" value="ATPASE_ALPHA_BETA"/>
    <property type="match status" value="1"/>
</dbReference>
<proteinExistence type="inferred from homology"/>
<gene>
    <name evidence="1" type="primary">atpD</name>
    <name type="ordered locus">Shew_3845</name>
</gene>
<sequence length="458" mass="49414">MSTGTVVQVIGAVVDVEFPHDAVPQVYDALEIKSEGLVLEVQQQLGGGVVRTIAMGSSDGLRRGIEVVNTGSPITVPVGSATLGRIMNVLGQPVDEAGPIGEDERYVIHREAPSYEDQSNTTELLETGIKVIDLVCPFAKGGKVGLFGGAGVGKTVNMMELINNIAKAHSGLSVFAGVGERTREGNDFYYEMEESGVLDKVAMVYGQMNEPPGNRLRVALTGLTMAEKFRDEGKDVLLFVDNIYRYTLAGTEVSALLGRMPSAVGYQPTLAEEMGVLQERITSTKTGSITSVQAVYVPADDLTDPSPATTFAHLDATVVLSRNIASLGIYPAVDPLDSTSRQLDPQVVGQEHYDVASGVQNVLQRYKELKDIIAILGMDELSDEDKTTVARARKIEKYLSQPFFVAEVFTGSPGKYVALKDTIRGFKGLLEGEFDHIPEQAFYMAGSIDEVIERANKK</sequence>
<reference key="1">
    <citation type="submission" date="2007-03" db="EMBL/GenBank/DDBJ databases">
        <title>Complete sequence of Shewanella loihica PV-4.</title>
        <authorList>
            <consortium name="US DOE Joint Genome Institute"/>
            <person name="Copeland A."/>
            <person name="Lucas S."/>
            <person name="Lapidus A."/>
            <person name="Barry K."/>
            <person name="Detter J.C."/>
            <person name="Glavina del Rio T."/>
            <person name="Hammon N."/>
            <person name="Israni S."/>
            <person name="Dalin E."/>
            <person name="Tice H."/>
            <person name="Pitluck S."/>
            <person name="Chain P."/>
            <person name="Malfatti S."/>
            <person name="Shin M."/>
            <person name="Vergez L."/>
            <person name="Schmutz J."/>
            <person name="Larimer F."/>
            <person name="Land M."/>
            <person name="Hauser L."/>
            <person name="Kyrpides N."/>
            <person name="Mikhailova N."/>
            <person name="Romine M.F."/>
            <person name="Serres G."/>
            <person name="Fredrickson J."/>
            <person name="Tiedje J."/>
            <person name="Richardson P."/>
        </authorList>
    </citation>
    <scope>NUCLEOTIDE SEQUENCE [LARGE SCALE GENOMIC DNA]</scope>
    <source>
        <strain>ATCC BAA-1088 / PV-4</strain>
    </source>
</reference>
<protein>
    <recommendedName>
        <fullName evidence="1">ATP synthase subunit beta</fullName>
        <ecNumber evidence="1">7.1.2.2</ecNumber>
    </recommendedName>
    <alternativeName>
        <fullName evidence="1">ATP synthase F1 sector subunit beta</fullName>
    </alternativeName>
    <alternativeName>
        <fullName evidence="1">F-ATPase subunit beta</fullName>
    </alternativeName>
</protein>
<name>ATPB_SHELP</name>
<organism>
    <name type="scientific">Shewanella loihica (strain ATCC BAA-1088 / PV-4)</name>
    <dbReference type="NCBI Taxonomy" id="323850"/>
    <lineage>
        <taxon>Bacteria</taxon>
        <taxon>Pseudomonadati</taxon>
        <taxon>Pseudomonadota</taxon>
        <taxon>Gammaproteobacteria</taxon>
        <taxon>Alteromonadales</taxon>
        <taxon>Shewanellaceae</taxon>
        <taxon>Shewanella</taxon>
    </lineage>
</organism>
<comment type="function">
    <text evidence="1">Produces ATP from ADP in the presence of a proton gradient across the membrane. The catalytic sites are hosted primarily by the beta subunits.</text>
</comment>
<comment type="catalytic activity">
    <reaction evidence="1">
        <text>ATP + H2O + 4 H(+)(in) = ADP + phosphate + 5 H(+)(out)</text>
        <dbReference type="Rhea" id="RHEA:57720"/>
        <dbReference type="ChEBI" id="CHEBI:15377"/>
        <dbReference type="ChEBI" id="CHEBI:15378"/>
        <dbReference type="ChEBI" id="CHEBI:30616"/>
        <dbReference type="ChEBI" id="CHEBI:43474"/>
        <dbReference type="ChEBI" id="CHEBI:456216"/>
        <dbReference type="EC" id="7.1.2.2"/>
    </reaction>
</comment>
<comment type="subunit">
    <text evidence="1">F-type ATPases have 2 components, CF(1) - the catalytic core - and CF(0) - the membrane proton channel. CF(1) has five subunits: alpha(3), beta(3), gamma(1), delta(1), epsilon(1). CF(0) has three main subunits: a(1), b(2) and c(9-12). The alpha and beta chains form an alternating ring which encloses part of the gamma chain. CF(1) is attached to CF(0) by a central stalk formed by the gamma and epsilon chains, while a peripheral stalk is formed by the delta and b chains.</text>
</comment>
<comment type="subcellular location">
    <subcellularLocation>
        <location evidence="1">Cell inner membrane</location>
        <topology evidence="1">Peripheral membrane protein</topology>
    </subcellularLocation>
</comment>
<comment type="similarity">
    <text evidence="1">Belongs to the ATPase alpha/beta chains family.</text>
</comment>
<accession>A3QJR0</accession>
<evidence type="ECO:0000255" key="1">
    <source>
        <dbReference type="HAMAP-Rule" id="MF_01347"/>
    </source>
</evidence>